<sequence length="493" mass="54442">MWSRRQGRLRPTVCGVEELRRRRREREAALRKARREQQLVSKRLLRNDAPEEAGEGCVAAILGETEVQQFLRQAQRGTEEKEREGALVSLRRGLQHPETQQTFIRLEGSMRTLVGLLTSNQALLQLEAARCLHELSHSEQSTVAEACLPATSYLLTYLSSHSSDFIELCLYTLGNLIVESEAVRRQLLPQGIVPALAACIQSPHVAVLEALGYALSQLLQAEEAPEKIIPSILASTLPQHMLQMLQPGPKLNPGVAVEFAWCLHYIICSQVSNPLLIGHGALSTLGLLLLDLAGAVQKTEDAGLELLACPVLRCLSNLLTEAAVETVGGQMQLRDERVVAALFILLQFFFQKQPSLLPEGLWLLNNLTANSPSFCTSLLSLDLIEPLLQLLPVSNVVSVMVLTVLCNVAEKGPAYCQRLWPGPLLPALLHTLAFSDTEVVGQSLELLHLLFLYQPEAVQVFLQQSGLQALERHQEEAQLQDRVYALQQTALQG</sequence>
<gene>
    <name type="primary">TMCO6</name>
    <name type="ORF">PRO1580</name>
</gene>
<name>TMCO6_HUMAN</name>
<keyword id="KW-0025">Alternative splicing</keyword>
<keyword id="KW-0175">Coiled coil</keyword>
<keyword id="KW-0472">Membrane</keyword>
<keyword id="KW-1267">Proteomics identification</keyword>
<keyword id="KW-1185">Reference proteome</keyword>
<keyword id="KW-0812">Transmembrane</keyword>
<keyword id="KW-1133">Transmembrane helix</keyword>
<organism>
    <name type="scientific">Homo sapiens</name>
    <name type="common">Human</name>
    <dbReference type="NCBI Taxonomy" id="9606"/>
    <lineage>
        <taxon>Eukaryota</taxon>
        <taxon>Metazoa</taxon>
        <taxon>Chordata</taxon>
        <taxon>Craniata</taxon>
        <taxon>Vertebrata</taxon>
        <taxon>Euteleostomi</taxon>
        <taxon>Mammalia</taxon>
        <taxon>Eutheria</taxon>
        <taxon>Euarchontoglires</taxon>
        <taxon>Primates</taxon>
        <taxon>Haplorrhini</taxon>
        <taxon>Catarrhini</taxon>
        <taxon>Hominidae</taxon>
        <taxon>Homo</taxon>
    </lineage>
</organism>
<protein>
    <recommendedName>
        <fullName>Transmembrane and coiled-coil domain-containing protein 6</fullName>
    </recommendedName>
</protein>
<reference key="1">
    <citation type="journal article" date="2004" name="Nat. Genet.">
        <title>Complete sequencing and characterization of 21,243 full-length human cDNAs.</title>
        <authorList>
            <person name="Ota T."/>
            <person name="Suzuki Y."/>
            <person name="Nishikawa T."/>
            <person name="Otsuki T."/>
            <person name="Sugiyama T."/>
            <person name="Irie R."/>
            <person name="Wakamatsu A."/>
            <person name="Hayashi K."/>
            <person name="Sato H."/>
            <person name="Nagai K."/>
            <person name="Kimura K."/>
            <person name="Makita H."/>
            <person name="Sekine M."/>
            <person name="Obayashi M."/>
            <person name="Nishi T."/>
            <person name="Shibahara T."/>
            <person name="Tanaka T."/>
            <person name="Ishii S."/>
            <person name="Yamamoto J."/>
            <person name="Saito K."/>
            <person name="Kawai Y."/>
            <person name="Isono Y."/>
            <person name="Nakamura Y."/>
            <person name="Nagahari K."/>
            <person name="Murakami K."/>
            <person name="Yasuda T."/>
            <person name="Iwayanagi T."/>
            <person name="Wagatsuma M."/>
            <person name="Shiratori A."/>
            <person name="Sudo H."/>
            <person name="Hosoiri T."/>
            <person name="Kaku Y."/>
            <person name="Kodaira H."/>
            <person name="Kondo H."/>
            <person name="Sugawara M."/>
            <person name="Takahashi M."/>
            <person name="Kanda K."/>
            <person name="Yokoi T."/>
            <person name="Furuya T."/>
            <person name="Kikkawa E."/>
            <person name="Omura Y."/>
            <person name="Abe K."/>
            <person name="Kamihara K."/>
            <person name="Katsuta N."/>
            <person name="Sato K."/>
            <person name="Tanikawa M."/>
            <person name="Yamazaki M."/>
            <person name="Ninomiya K."/>
            <person name="Ishibashi T."/>
            <person name="Yamashita H."/>
            <person name="Murakawa K."/>
            <person name="Fujimori K."/>
            <person name="Tanai H."/>
            <person name="Kimata M."/>
            <person name="Watanabe M."/>
            <person name="Hiraoka S."/>
            <person name="Chiba Y."/>
            <person name="Ishida S."/>
            <person name="Ono Y."/>
            <person name="Takiguchi S."/>
            <person name="Watanabe S."/>
            <person name="Yosida M."/>
            <person name="Hotuta T."/>
            <person name="Kusano J."/>
            <person name="Kanehori K."/>
            <person name="Takahashi-Fujii A."/>
            <person name="Hara H."/>
            <person name="Tanase T.-O."/>
            <person name="Nomura Y."/>
            <person name="Togiya S."/>
            <person name="Komai F."/>
            <person name="Hara R."/>
            <person name="Takeuchi K."/>
            <person name="Arita M."/>
            <person name="Imose N."/>
            <person name="Musashino K."/>
            <person name="Yuuki H."/>
            <person name="Oshima A."/>
            <person name="Sasaki N."/>
            <person name="Aotsuka S."/>
            <person name="Yoshikawa Y."/>
            <person name="Matsunawa H."/>
            <person name="Ichihara T."/>
            <person name="Shiohata N."/>
            <person name="Sano S."/>
            <person name="Moriya S."/>
            <person name="Momiyama H."/>
            <person name="Satoh N."/>
            <person name="Takami S."/>
            <person name="Terashima Y."/>
            <person name="Suzuki O."/>
            <person name="Nakagawa S."/>
            <person name="Senoh A."/>
            <person name="Mizoguchi H."/>
            <person name="Goto Y."/>
            <person name="Shimizu F."/>
            <person name="Wakebe H."/>
            <person name="Hishigaki H."/>
            <person name="Watanabe T."/>
            <person name="Sugiyama A."/>
            <person name="Takemoto M."/>
            <person name="Kawakami B."/>
            <person name="Yamazaki M."/>
            <person name="Watanabe K."/>
            <person name="Kumagai A."/>
            <person name="Itakura S."/>
            <person name="Fukuzumi Y."/>
            <person name="Fujimori Y."/>
            <person name="Komiyama M."/>
            <person name="Tashiro H."/>
            <person name="Tanigami A."/>
            <person name="Fujiwara T."/>
            <person name="Ono T."/>
            <person name="Yamada K."/>
            <person name="Fujii Y."/>
            <person name="Ozaki K."/>
            <person name="Hirao M."/>
            <person name="Ohmori Y."/>
            <person name="Kawabata A."/>
            <person name="Hikiji T."/>
            <person name="Kobatake N."/>
            <person name="Inagaki H."/>
            <person name="Ikema Y."/>
            <person name="Okamoto S."/>
            <person name="Okitani R."/>
            <person name="Kawakami T."/>
            <person name="Noguchi S."/>
            <person name="Itoh T."/>
            <person name="Shigeta K."/>
            <person name="Senba T."/>
            <person name="Matsumura K."/>
            <person name="Nakajima Y."/>
            <person name="Mizuno T."/>
            <person name="Morinaga M."/>
            <person name="Sasaki M."/>
            <person name="Togashi T."/>
            <person name="Oyama M."/>
            <person name="Hata H."/>
            <person name="Watanabe M."/>
            <person name="Komatsu T."/>
            <person name="Mizushima-Sugano J."/>
            <person name="Satoh T."/>
            <person name="Shirai Y."/>
            <person name="Takahashi Y."/>
            <person name="Nakagawa K."/>
            <person name="Okumura K."/>
            <person name="Nagase T."/>
            <person name="Nomura N."/>
            <person name="Kikuchi H."/>
            <person name="Masuho Y."/>
            <person name="Yamashita R."/>
            <person name="Nakai K."/>
            <person name="Yada T."/>
            <person name="Nakamura Y."/>
            <person name="Ohara O."/>
            <person name="Isogai T."/>
            <person name="Sugano S."/>
        </authorList>
    </citation>
    <scope>NUCLEOTIDE SEQUENCE [LARGE SCALE MRNA] (ISOFORM 1)</scope>
    <source>
        <tissue>Spleen</tissue>
    </source>
</reference>
<reference key="2">
    <citation type="submission" date="2005-09" db="EMBL/GenBank/DDBJ databases">
        <authorList>
            <person name="Mural R.J."/>
            <person name="Istrail S."/>
            <person name="Sutton G.G."/>
            <person name="Florea L."/>
            <person name="Halpern A.L."/>
            <person name="Mobarry C.M."/>
            <person name="Lippert R."/>
            <person name="Walenz B."/>
            <person name="Shatkay H."/>
            <person name="Dew I."/>
            <person name="Miller J.R."/>
            <person name="Flanigan M.J."/>
            <person name="Edwards N.J."/>
            <person name="Bolanos R."/>
            <person name="Fasulo D."/>
            <person name="Halldorsson B.V."/>
            <person name="Hannenhalli S."/>
            <person name="Turner R."/>
            <person name="Yooseph S."/>
            <person name="Lu F."/>
            <person name="Nusskern D.R."/>
            <person name="Shue B.C."/>
            <person name="Zheng X.H."/>
            <person name="Zhong F."/>
            <person name="Delcher A.L."/>
            <person name="Huson D.H."/>
            <person name="Kravitz S.A."/>
            <person name="Mouchard L."/>
            <person name="Reinert K."/>
            <person name="Remington K.A."/>
            <person name="Clark A.G."/>
            <person name="Waterman M.S."/>
            <person name="Eichler E.E."/>
            <person name="Adams M.D."/>
            <person name="Hunkapiller M.W."/>
            <person name="Myers E.W."/>
            <person name="Venter J.C."/>
        </authorList>
    </citation>
    <scope>NUCLEOTIDE SEQUENCE [LARGE SCALE GENOMIC DNA]</scope>
</reference>
<reference key="3">
    <citation type="journal article" date="2004" name="Genome Res.">
        <title>The status, quality, and expansion of the NIH full-length cDNA project: the Mammalian Gene Collection (MGC).</title>
        <authorList>
            <consortium name="The MGC Project Team"/>
        </authorList>
    </citation>
    <scope>NUCLEOTIDE SEQUENCE [LARGE SCALE MRNA] (ISOFORM 2)</scope>
    <scope>NUCLEOTIDE SEQUENCE [LARGE SCALE MRNA] OF 223-493 (ISOFORM 1)</scope>
    <scope>VARIANT SER-299</scope>
    <source>
        <tissue>Lung</tissue>
        <tissue>Pancreas</tissue>
    </source>
</reference>
<reference key="4">
    <citation type="submission" date="1999-01" db="EMBL/GenBank/DDBJ databases">
        <title>Functional prediction of the coding sequences of 79 new genes deduced by analysis of cDNA clones from human fetal liver.</title>
        <authorList>
            <person name="Zhang C."/>
            <person name="Yu Y."/>
            <person name="Zhang S."/>
            <person name="Wei H."/>
            <person name="Zhang Y."/>
            <person name="Zhou G."/>
            <person name="Bi J."/>
            <person name="Liu M."/>
            <person name="He F."/>
        </authorList>
    </citation>
    <scope>NUCLEOTIDE SEQUENCE [LARGE SCALE MRNA] OF 241-493</scope>
    <source>
        <tissue>Fetal liver</tissue>
    </source>
</reference>
<feature type="chain" id="PRO_0000305157" description="Transmembrane and coiled-coil domain-containing protein 6">
    <location>
        <begin position="1"/>
        <end position="493"/>
    </location>
</feature>
<feature type="transmembrane region" description="Helical" evidence="1">
    <location>
        <begin position="338"/>
        <end position="358"/>
    </location>
</feature>
<feature type="transmembrane region" description="Helical" evidence="1">
    <location>
        <begin position="386"/>
        <end position="406"/>
    </location>
</feature>
<feature type="coiled-coil region" evidence="1">
    <location>
        <begin position="15"/>
        <end position="84"/>
    </location>
</feature>
<feature type="splice variant" id="VSP_028249" description="In isoform 2." evidence="3">
    <original>P</original>
    <variation>PPASASS</variation>
    <location>
        <position position="230"/>
    </location>
</feature>
<feature type="sequence variant" id="VAR_035171" description="In dbSNP:rs17208187." evidence="2">
    <original>T</original>
    <variation>S</variation>
    <location>
        <position position="299"/>
    </location>
</feature>
<feature type="sequence conflict" description="In Ref. 4; AAF69602." evidence="4" ref="4">
    <original>Q</original>
    <variation>R</variation>
    <location>
        <position position="442"/>
    </location>
</feature>
<proteinExistence type="evidence at protein level"/>
<evidence type="ECO:0000255" key="1"/>
<evidence type="ECO:0000269" key="2">
    <source>
    </source>
</evidence>
<evidence type="ECO:0000303" key="3">
    <source>
    </source>
</evidence>
<evidence type="ECO:0000305" key="4"/>
<comment type="interaction">
    <interactant intactId="EBI-746174">
        <id>Q96DC7</id>
    </interactant>
    <interactant intactId="EBI-741480">
        <id>Q9UMX0</id>
        <label>UBQLN1</label>
    </interactant>
    <organismsDiffer>false</organismsDiffer>
    <experiments>7</experiments>
</comment>
<comment type="interaction">
    <interactant intactId="EBI-746174">
        <id>Q96DC7</id>
    </interactant>
    <interactant intactId="EBI-10269136">
        <id>Q8NB15</id>
        <label>ZNF511</label>
    </interactant>
    <organismsDiffer>false</organismsDiffer>
    <experiments>8</experiments>
</comment>
<comment type="interaction">
    <interactant intactId="EBI-10284552">
        <id>Q96DC7-2</id>
    </interactant>
    <interactant intactId="EBI-741480">
        <id>Q9UMX0</id>
        <label>UBQLN1</label>
    </interactant>
    <organismsDiffer>false</organismsDiffer>
    <experiments>3</experiments>
</comment>
<comment type="interaction">
    <interactant intactId="EBI-10284552">
        <id>Q96DC7-2</id>
    </interactant>
    <interactant intactId="EBI-10173939">
        <id>Q9UMX0-2</id>
        <label>UBQLN1</label>
    </interactant>
    <organismsDiffer>false</organismsDiffer>
    <experiments>3</experiments>
</comment>
<comment type="subcellular location">
    <subcellularLocation>
        <location evidence="4">Membrane</location>
        <topology evidence="4">Multi-pass membrane protein</topology>
    </subcellularLocation>
</comment>
<comment type="alternative products">
    <event type="alternative splicing"/>
    <isoform>
        <id>Q96DC7-1</id>
        <name>1</name>
        <sequence type="displayed"/>
    </isoform>
    <isoform>
        <id>Q96DC7-2</id>
        <name>2</name>
        <sequence type="described" ref="VSP_028249"/>
    </isoform>
</comment>
<comment type="sequence caution" evidence="4">
    <conflict type="miscellaneous discrepancy">
        <sequence resource="EMBL-CDS" id="AAF69602"/>
    </conflict>
    <text>Chimeric cDNA.</text>
</comment>
<comment type="sequence caution" evidence="4">
    <conflict type="erroneous initiation">
        <sequence resource="EMBL-CDS" id="AAH01910"/>
    </conflict>
</comment>
<comment type="sequence caution" evidence="4">
    <conflict type="erroneous initiation">
        <sequence resource="EMBL-CDS" id="AAH09618"/>
    </conflict>
</comment>
<comment type="sequence caution" evidence="4">
    <conflict type="erroneous gene model prediction">
        <sequence resource="EMBL-CDS" id="EAW62034"/>
    </conflict>
</comment>
<dbReference type="EMBL" id="AK097088">
    <property type="status" value="NOT_ANNOTATED_CDS"/>
    <property type="molecule type" value="mRNA"/>
</dbReference>
<dbReference type="EMBL" id="CH471062">
    <property type="protein sequence ID" value="EAW62034.1"/>
    <property type="status" value="ALT_SEQ"/>
    <property type="molecule type" value="Genomic_DNA"/>
</dbReference>
<dbReference type="EMBL" id="BC001910">
    <property type="protein sequence ID" value="AAH01910.1"/>
    <property type="status" value="ALT_INIT"/>
    <property type="molecule type" value="mRNA"/>
</dbReference>
<dbReference type="EMBL" id="BC009618">
    <property type="protein sequence ID" value="AAH09618.1"/>
    <property type="status" value="ALT_INIT"/>
    <property type="molecule type" value="mRNA"/>
</dbReference>
<dbReference type="EMBL" id="AF119848">
    <property type="protein sequence ID" value="AAF69602.1"/>
    <property type="status" value="ALT_SEQ"/>
    <property type="molecule type" value="mRNA"/>
</dbReference>
<dbReference type="CCDS" id="CCDS4233.2">
    <molecule id="Q96DC7-1"/>
</dbReference>
<dbReference type="CCDS" id="CCDS75320.1">
    <molecule id="Q96DC7-2"/>
</dbReference>
<dbReference type="RefSeq" id="NP_001287909.1">
    <molecule id="Q96DC7-2"/>
    <property type="nucleotide sequence ID" value="NM_001300980.2"/>
</dbReference>
<dbReference type="RefSeq" id="NP_001287911.1">
    <property type="nucleotide sequence ID" value="NM_001300982.1"/>
</dbReference>
<dbReference type="RefSeq" id="NP_060972.3">
    <molecule id="Q96DC7-1"/>
    <property type="nucleotide sequence ID" value="NM_018502.4"/>
</dbReference>
<dbReference type="RefSeq" id="XP_011535970.1">
    <property type="nucleotide sequence ID" value="XM_011537668.2"/>
</dbReference>
<dbReference type="RefSeq" id="XP_016865109.1">
    <property type="nucleotide sequence ID" value="XM_017009620.1"/>
</dbReference>
<dbReference type="SMR" id="Q96DC7"/>
<dbReference type="BioGRID" id="120647">
    <property type="interactions" value="16"/>
</dbReference>
<dbReference type="FunCoup" id="Q96DC7">
    <property type="interactions" value="838"/>
</dbReference>
<dbReference type="IntAct" id="Q96DC7">
    <property type="interactions" value="10"/>
</dbReference>
<dbReference type="STRING" id="9606.ENSP00000252100"/>
<dbReference type="iPTMnet" id="Q96DC7"/>
<dbReference type="PhosphoSitePlus" id="Q96DC7"/>
<dbReference type="BioMuta" id="TMCO6"/>
<dbReference type="DMDM" id="158706351"/>
<dbReference type="jPOST" id="Q96DC7"/>
<dbReference type="MassIVE" id="Q96DC7"/>
<dbReference type="PaxDb" id="9606-ENSP00000252100"/>
<dbReference type="PeptideAtlas" id="Q96DC7"/>
<dbReference type="Pumba" id="Q96DC7"/>
<dbReference type="Antibodypedia" id="45459">
    <property type="antibodies" value="61 antibodies from 18 providers"/>
</dbReference>
<dbReference type="DNASU" id="55374"/>
<dbReference type="Ensembl" id="ENST00000252100.6">
    <molecule id="Q96DC7-2"/>
    <property type="protein sequence ID" value="ENSP00000252100.6"/>
    <property type="gene ID" value="ENSG00000113119.13"/>
</dbReference>
<dbReference type="Ensembl" id="ENST00000394671.8">
    <molecule id="Q96DC7-1"/>
    <property type="protein sequence ID" value="ENSP00000378166.3"/>
    <property type="gene ID" value="ENSG00000113119.13"/>
</dbReference>
<dbReference type="GeneID" id="55374"/>
<dbReference type="KEGG" id="hsa:55374"/>
<dbReference type="MANE-Select" id="ENST00000394671.8">
    <property type="protein sequence ID" value="ENSP00000378166.3"/>
    <property type="RefSeq nucleotide sequence ID" value="NM_018502.5"/>
    <property type="RefSeq protein sequence ID" value="NP_060972.3"/>
</dbReference>
<dbReference type="UCSC" id="uc003lgl.4">
    <molecule id="Q96DC7-1"/>
    <property type="organism name" value="human"/>
</dbReference>
<dbReference type="AGR" id="HGNC:28814"/>
<dbReference type="CTD" id="55374"/>
<dbReference type="DisGeNET" id="55374"/>
<dbReference type="GeneCards" id="TMCO6"/>
<dbReference type="HGNC" id="HGNC:28814">
    <property type="gene designation" value="TMCO6"/>
</dbReference>
<dbReference type="HPA" id="ENSG00000113119">
    <property type="expression patterns" value="Low tissue specificity"/>
</dbReference>
<dbReference type="MalaCards" id="TMCO6"/>
<dbReference type="neXtProt" id="NX_Q96DC7"/>
<dbReference type="OpenTargets" id="ENSG00000113119"/>
<dbReference type="PharmGKB" id="PA162405810"/>
<dbReference type="VEuPathDB" id="HostDB:ENSG00000113119"/>
<dbReference type="eggNOG" id="ENOG502QPMC">
    <property type="taxonomic scope" value="Eukaryota"/>
</dbReference>
<dbReference type="GeneTree" id="ENSGT00390000008104"/>
<dbReference type="HOGENOM" id="CLU_043630_0_0_1"/>
<dbReference type="InParanoid" id="Q96DC7"/>
<dbReference type="OMA" id="TLGNICP"/>
<dbReference type="OrthoDB" id="21522at2759"/>
<dbReference type="PAN-GO" id="Q96DC7">
    <property type="GO annotations" value="0 GO annotations based on evolutionary models"/>
</dbReference>
<dbReference type="PhylomeDB" id="Q96DC7"/>
<dbReference type="TreeFam" id="TF331378"/>
<dbReference type="PathwayCommons" id="Q96DC7"/>
<dbReference type="SignaLink" id="Q96DC7"/>
<dbReference type="BioGRID-ORCS" id="55374">
    <property type="hits" value="78 hits in 1159 CRISPR screens"/>
</dbReference>
<dbReference type="ChiTaRS" id="TMCO6">
    <property type="organism name" value="human"/>
</dbReference>
<dbReference type="GenomeRNAi" id="55374"/>
<dbReference type="Pharos" id="Q96DC7">
    <property type="development level" value="Tdark"/>
</dbReference>
<dbReference type="PRO" id="PR:Q96DC7"/>
<dbReference type="Proteomes" id="UP000005640">
    <property type="component" value="Chromosome 5"/>
</dbReference>
<dbReference type="RNAct" id="Q96DC7">
    <property type="molecule type" value="protein"/>
</dbReference>
<dbReference type="Bgee" id="ENSG00000113119">
    <property type="expression patterns" value="Expressed in sural nerve and 133 other cell types or tissues"/>
</dbReference>
<dbReference type="ExpressionAtlas" id="Q96DC7">
    <property type="expression patterns" value="baseline and differential"/>
</dbReference>
<dbReference type="GO" id="GO:0016020">
    <property type="term" value="C:membrane"/>
    <property type="evidence" value="ECO:0007669"/>
    <property type="project" value="UniProtKB-SubCell"/>
</dbReference>
<dbReference type="GO" id="GO:0061608">
    <property type="term" value="F:nuclear import signal receptor activity"/>
    <property type="evidence" value="ECO:0007669"/>
    <property type="project" value="InterPro"/>
</dbReference>
<dbReference type="GO" id="GO:0006606">
    <property type="term" value="P:protein import into nucleus"/>
    <property type="evidence" value="ECO:0007669"/>
    <property type="project" value="InterPro"/>
</dbReference>
<dbReference type="Gene3D" id="1.25.10.10">
    <property type="entry name" value="Leucine-rich Repeat Variant"/>
    <property type="match status" value="1"/>
</dbReference>
<dbReference type="InterPro" id="IPR011989">
    <property type="entry name" value="ARM-like"/>
</dbReference>
<dbReference type="InterPro" id="IPR016024">
    <property type="entry name" value="ARM-type_fold"/>
</dbReference>
<dbReference type="InterPro" id="IPR000225">
    <property type="entry name" value="Armadillo"/>
</dbReference>
<dbReference type="InterPro" id="IPR002652">
    <property type="entry name" value="Importin-a_IBB"/>
</dbReference>
<dbReference type="PANTHER" id="PTHR16356:SF1">
    <property type="entry name" value="TRANSMEMBRANE AND COILED-COIL DOMAIN-CONTAINING PROTEIN 6"/>
    <property type="match status" value="1"/>
</dbReference>
<dbReference type="PANTHER" id="PTHR16356">
    <property type="entry name" value="TRANSMEMBRANE AND COILED-COIL DOMAIN-CONTAINING PROTEIN 6 TMCO6"/>
    <property type="match status" value="1"/>
</dbReference>
<dbReference type="SMART" id="SM00185">
    <property type="entry name" value="ARM"/>
    <property type="match status" value="5"/>
</dbReference>
<dbReference type="SUPFAM" id="SSF48371">
    <property type="entry name" value="ARM repeat"/>
    <property type="match status" value="1"/>
</dbReference>
<accession>Q96DC7</accession>
<accession>Q9BUU0</accession>
<accession>Q9P198</accession>